<evidence type="ECO:0000255" key="1">
    <source>
        <dbReference type="HAMAP-Rule" id="MF_01077"/>
    </source>
</evidence>
<sequence>MGLSTLEQKLTEMITAPVEALGFELVGIEFIRGRTSTLRIYIDSEDGINVDDCADVSHQVSAVLDVEDPITVAYNLEVSSPGLDRPLFTAEHYARFVGEEVTLVLRMAVQNRRKWQGVIKAVDGEMITVTVEGKDEVFALSNIQKANLVPHF</sequence>
<accession>P0A8B1</accession>
<accession>P03843</accession>
<accession>Q8X9M1</accession>
<dbReference type="EMBL" id="AE005674">
    <property type="protein sequence ID" value="AAN44678.2"/>
    <property type="molecule type" value="Genomic_DNA"/>
</dbReference>
<dbReference type="EMBL" id="AE014073">
    <property type="protein sequence ID" value="AAP18492.1"/>
    <property type="molecule type" value="Genomic_DNA"/>
</dbReference>
<dbReference type="SMR" id="P0A8B1"/>
<dbReference type="STRING" id="198214.SF3211"/>
<dbReference type="PaxDb" id="198214-SF3211"/>
<dbReference type="KEGG" id="sfl:SF3211"/>
<dbReference type="KEGG" id="sfx:S3428"/>
<dbReference type="PATRIC" id="fig|198214.7.peg.3811"/>
<dbReference type="HOGENOM" id="CLU_070525_1_1_6"/>
<dbReference type="Proteomes" id="UP000001006">
    <property type="component" value="Chromosome"/>
</dbReference>
<dbReference type="Proteomes" id="UP000002673">
    <property type="component" value="Chromosome"/>
</dbReference>
<dbReference type="GO" id="GO:0005829">
    <property type="term" value="C:cytosol"/>
    <property type="evidence" value="ECO:0007669"/>
    <property type="project" value="TreeGrafter"/>
</dbReference>
<dbReference type="GO" id="GO:0000028">
    <property type="term" value="P:ribosomal small subunit assembly"/>
    <property type="evidence" value="ECO:0007669"/>
    <property type="project" value="TreeGrafter"/>
</dbReference>
<dbReference type="GO" id="GO:0006412">
    <property type="term" value="P:translation"/>
    <property type="evidence" value="ECO:0007669"/>
    <property type="project" value="TreeGrafter"/>
</dbReference>
<dbReference type="CDD" id="cd01734">
    <property type="entry name" value="YlxS_C"/>
    <property type="match status" value="1"/>
</dbReference>
<dbReference type="FunFam" id="2.30.30.180:FF:000001">
    <property type="entry name" value="Ribosome maturation factor RimP"/>
    <property type="match status" value="1"/>
</dbReference>
<dbReference type="FunFam" id="3.30.300.70:FF:000001">
    <property type="entry name" value="Ribosome maturation factor RimP"/>
    <property type="match status" value="1"/>
</dbReference>
<dbReference type="Gene3D" id="2.30.30.180">
    <property type="entry name" value="Ribosome maturation factor RimP, C-terminal domain"/>
    <property type="match status" value="1"/>
</dbReference>
<dbReference type="Gene3D" id="3.30.300.70">
    <property type="entry name" value="RimP-like superfamily, N-terminal"/>
    <property type="match status" value="1"/>
</dbReference>
<dbReference type="HAMAP" id="MF_01077">
    <property type="entry name" value="RimP"/>
    <property type="match status" value="1"/>
</dbReference>
<dbReference type="InterPro" id="IPR003728">
    <property type="entry name" value="Ribosome_maturation_RimP"/>
</dbReference>
<dbReference type="InterPro" id="IPR028998">
    <property type="entry name" value="RimP_C"/>
</dbReference>
<dbReference type="InterPro" id="IPR036847">
    <property type="entry name" value="RimP_C_sf"/>
</dbReference>
<dbReference type="InterPro" id="IPR028989">
    <property type="entry name" value="RimP_N"/>
</dbReference>
<dbReference type="InterPro" id="IPR035956">
    <property type="entry name" value="RimP_N_sf"/>
</dbReference>
<dbReference type="NCBIfam" id="NF000927">
    <property type="entry name" value="PRK00092.1-1"/>
    <property type="match status" value="1"/>
</dbReference>
<dbReference type="PANTHER" id="PTHR33867">
    <property type="entry name" value="RIBOSOME MATURATION FACTOR RIMP"/>
    <property type="match status" value="1"/>
</dbReference>
<dbReference type="PANTHER" id="PTHR33867:SF1">
    <property type="entry name" value="RIBOSOME MATURATION FACTOR RIMP"/>
    <property type="match status" value="1"/>
</dbReference>
<dbReference type="Pfam" id="PF17384">
    <property type="entry name" value="DUF150_C"/>
    <property type="match status" value="1"/>
</dbReference>
<dbReference type="Pfam" id="PF02576">
    <property type="entry name" value="RimP_N"/>
    <property type="match status" value="1"/>
</dbReference>
<dbReference type="SUPFAM" id="SSF74942">
    <property type="entry name" value="YhbC-like, C-terminal domain"/>
    <property type="match status" value="1"/>
</dbReference>
<dbReference type="SUPFAM" id="SSF75420">
    <property type="entry name" value="YhbC-like, N-terminal domain"/>
    <property type="match status" value="1"/>
</dbReference>
<keyword id="KW-0963">Cytoplasm</keyword>
<keyword id="KW-1185">Reference proteome</keyword>
<keyword id="KW-0690">Ribosome biogenesis</keyword>
<gene>
    <name evidence="1" type="primary">rimP</name>
    <name type="ordered locus">SF3211</name>
    <name type="ordered locus">S3428</name>
</gene>
<feature type="chain" id="PRO_0000181918" description="Ribosome maturation factor RimP">
    <location>
        <begin position="1"/>
        <end position="152"/>
    </location>
</feature>
<protein>
    <recommendedName>
        <fullName evidence="1">Ribosome maturation factor RimP</fullName>
    </recommendedName>
</protein>
<proteinExistence type="inferred from homology"/>
<organism>
    <name type="scientific">Shigella flexneri</name>
    <dbReference type="NCBI Taxonomy" id="623"/>
    <lineage>
        <taxon>Bacteria</taxon>
        <taxon>Pseudomonadati</taxon>
        <taxon>Pseudomonadota</taxon>
        <taxon>Gammaproteobacteria</taxon>
        <taxon>Enterobacterales</taxon>
        <taxon>Enterobacteriaceae</taxon>
        <taxon>Shigella</taxon>
    </lineage>
</organism>
<comment type="function">
    <text evidence="1">Required for maturation of 30S ribosomal subunits.</text>
</comment>
<comment type="subcellular location">
    <subcellularLocation>
        <location evidence="1">Cytoplasm</location>
    </subcellularLocation>
</comment>
<comment type="similarity">
    <text evidence="1">Belongs to the RimP family.</text>
</comment>
<reference key="1">
    <citation type="journal article" date="2002" name="Nucleic Acids Res.">
        <title>Genome sequence of Shigella flexneri 2a: insights into pathogenicity through comparison with genomes of Escherichia coli K12 and O157.</title>
        <authorList>
            <person name="Jin Q."/>
            <person name="Yuan Z."/>
            <person name="Xu J."/>
            <person name="Wang Y."/>
            <person name="Shen Y."/>
            <person name="Lu W."/>
            <person name="Wang J."/>
            <person name="Liu H."/>
            <person name="Yang J."/>
            <person name="Yang F."/>
            <person name="Zhang X."/>
            <person name="Zhang J."/>
            <person name="Yang G."/>
            <person name="Wu H."/>
            <person name="Qu D."/>
            <person name="Dong J."/>
            <person name="Sun L."/>
            <person name="Xue Y."/>
            <person name="Zhao A."/>
            <person name="Gao Y."/>
            <person name="Zhu J."/>
            <person name="Kan B."/>
            <person name="Ding K."/>
            <person name="Chen S."/>
            <person name="Cheng H."/>
            <person name="Yao Z."/>
            <person name="He B."/>
            <person name="Chen R."/>
            <person name="Ma D."/>
            <person name="Qiang B."/>
            <person name="Wen Y."/>
            <person name="Hou Y."/>
            <person name="Yu J."/>
        </authorList>
    </citation>
    <scope>NUCLEOTIDE SEQUENCE [LARGE SCALE GENOMIC DNA]</scope>
    <source>
        <strain>301 / Serotype 2a</strain>
    </source>
</reference>
<reference key="2">
    <citation type="journal article" date="2003" name="Infect. Immun.">
        <title>Complete genome sequence and comparative genomics of Shigella flexneri serotype 2a strain 2457T.</title>
        <authorList>
            <person name="Wei J."/>
            <person name="Goldberg M.B."/>
            <person name="Burland V."/>
            <person name="Venkatesan M.M."/>
            <person name="Deng W."/>
            <person name="Fournier G."/>
            <person name="Mayhew G.F."/>
            <person name="Plunkett G. III"/>
            <person name="Rose D.J."/>
            <person name="Darling A."/>
            <person name="Mau B."/>
            <person name="Perna N.T."/>
            <person name="Payne S.M."/>
            <person name="Runyen-Janecky L.J."/>
            <person name="Zhou S."/>
            <person name="Schwartz D.C."/>
            <person name="Blattner F.R."/>
        </authorList>
    </citation>
    <scope>NUCLEOTIDE SEQUENCE [LARGE SCALE GENOMIC DNA]</scope>
    <source>
        <strain>ATCC 700930 / 2457T / Serotype 2a</strain>
    </source>
</reference>
<name>RIMP_SHIFL</name>